<accession>B8EJI4</accession>
<keyword id="KW-0963">Cytoplasm</keyword>
<keyword id="KW-0227">DNA damage</keyword>
<keyword id="KW-0233">DNA recombination</keyword>
<keyword id="KW-0234">DNA repair</keyword>
<keyword id="KW-0238">DNA-binding</keyword>
<keyword id="KW-0255">Endonuclease</keyword>
<keyword id="KW-0378">Hydrolase</keyword>
<keyword id="KW-0460">Magnesium</keyword>
<keyword id="KW-0479">Metal-binding</keyword>
<keyword id="KW-0540">Nuclease</keyword>
<keyword id="KW-1185">Reference proteome</keyword>
<feature type="chain" id="PRO_1000195263" description="Crossover junction endodeoxyribonuclease RuvC">
    <location>
        <begin position="1"/>
        <end position="176"/>
    </location>
</feature>
<feature type="active site" evidence="1">
    <location>
        <position position="12"/>
    </location>
</feature>
<feature type="active site" evidence="1">
    <location>
        <position position="72"/>
    </location>
</feature>
<feature type="active site" evidence="1">
    <location>
        <position position="144"/>
    </location>
</feature>
<feature type="binding site" evidence="1">
    <location>
        <position position="12"/>
    </location>
    <ligand>
        <name>Mg(2+)</name>
        <dbReference type="ChEBI" id="CHEBI:18420"/>
        <label>1</label>
    </ligand>
</feature>
<feature type="binding site" evidence="1">
    <location>
        <position position="72"/>
    </location>
    <ligand>
        <name>Mg(2+)</name>
        <dbReference type="ChEBI" id="CHEBI:18420"/>
        <label>2</label>
    </ligand>
</feature>
<feature type="binding site" evidence="1">
    <location>
        <position position="144"/>
    </location>
    <ligand>
        <name>Mg(2+)</name>
        <dbReference type="ChEBI" id="CHEBI:18420"/>
        <label>1</label>
    </ligand>
</feature>
<name>RUVC_METSB</name>
<dbReference type="EC" id="3.1.21.10" evidence="1"/>
<dbReference type="EMBL" id="CP001280">
    <property type="protein sequence ID" value="ACK48987.1"/>
    <property type="molecule type" value="Genomic_DNA"/>
</dbReference>
<dbReference type="RefSeq" id="WP_012589057.1">
    <property type="nucleotide sequence ID" value="NC_011666.1"/>
</dbReference>
<dbReference type="SMR" id="B8EJI4"/>
<dbReference type="STRING" id="395965.Msil_0002"/>
<dbReference type="KEGG" id="msl:Msil_0002"/>
<dbReference type="eggNOG" id="COG0817">
    <property type="taxonomic scope" value="Bacteria"/>
</dbReference>
<dbReference type="HOGENOM" id="CLU_091257_1_0_5"/>
<dbReference type="OrthoDB" id="9805499at2"/>
<dbReference type="Proteomes" id="UP000002257">
    <property type="component" value="Chromosome"/>
</dbReference>
<dbReference type="GO" id="GO:0005737">
    <property type="term" value="C:cytoplasm"/>
    <property type="evidence" value="ECO:0007669"/>
    <property type="project" value="UniProtKB-SubCell"/>
</dbReference>
<dbReference type="GO" id="GO:0048476">
    <property type="term" value="C:Holliday junction resolvase complex"/>
    <property type="evidence" value="ECO:0007669"/>
    <property type="project" value="UniProtKB-UniRule"/>
</dbReference>
<dbReference type="GO" id="GO:0008821">
    <property type="term" value="F:crossover junction DNA endonuclease activity"/>
    <property type="evidence" value="ECO:0007669"/>
    <property type="project" value="UniProtKB-UniRule"/>
</dbReference>
<dbReference type="GO" id="GO:0003677">
    <property type="term" value="F:DNA binding"/>
    <property type="evidence" value="ECO:0007669"/>
    <property type="project" value="UniProtKB-KW"/>
</dbReference>
<dbReference type="GO" id="GO:0000287">
    <property type="term" value="F:magnesium ion binding"/>
    <property type="evidence" value="ECO:0007669"/>
    <property type="project" value="UniProtKB-UniRule"/>
</dbReference>
<dbReference type="GO" id="GO:0006310">
    <property type="term" value="P:DNA recombination"/>
    <property type="evidence" value="ECO:0007669"/>
    <property type="project" value="UniProtKB-UniRule"/>
</dbReference>
<dbReference type="GO" id="GO:0006281">
    <property type="term" value="P:DNA repair"/>
    <property type="evidence" value="ECO:0007669"/>
    <property type="project" value="UniProtKB-UniRule"/>
</dbReference>
<dbReference type="CDD" id="cd16962">
    <property type="entry name" value="RuvC"/>
    <property type="match status" value="1"/>
</dbReference>
<dbReference type="FunFam" id="3.30.420.10:FF:000002">
    <property type="entry name" value="Crossover junction endodeoxyribonuclease RuvC"/>
    <property type="match status" value="1"/>
</dbReference>
<dbReference type="Gene3D" id="3.30.420.10">
    <property type="entry name" value="Ribonuclease H-like superfamily/Ribonuclease H"/>
    <property type="match status" value="1"/>
</dbReference>
<dbReference type="HAMAP" id="MF_00034">
    <property type="entry name" value="RuvC"/>
    <property type="match status" value="1"/>
</dbReference>
<dbReference type="InterPro" id="IPR012337">
    <property type="entry name" value="RNaseH-like_sf"/>
</dbReference>
<dbReference type="InterPro" id="IPR036397">
    <property type="entry name" value="RNaseH_sf"/>
</dbReference>
<dbReference type="InterPro" id="IPR020563">
    <property type="entry name" value="X-over_junc_endoDNase_Mg_BS"/>
</dbReference>
<dbReference type="InterPro" id="IPR002176">
    <property type="entry name" value="X-over_junc_endoDNase_RuvC"/>
</dbReference>
<dbReference type="NCBIfam" id="TIGR00228">
    <property type="entry name" value="ruvC"/>
    <property type="match status" value="1"/>
</dbReference>
<dbReference type="PANTHER" id="PTHR30194">
    <property type="entry name" value="CROSSOVER JUNCTION ENDODEOXYRIBONUCLEASE RUVC"/>
    <property type="match status" value="1"/>
</dbReference>
<dbReference type="PANTHER" id="PTHR30194:SF3">
    <property type="entry name" value="CROSSOVER JUNCTION ENDODEOXYRIBONUCLEASE RUVC"/>
    <property type="match status" value="1"/>
</dbReference>
<dbReference type="Pfam" id="PF02075">
    <property type="entry name" value="RuvC"/>
    <property type="match status" value="1"/>
</dbReference>
<dbReference type="PRINTS" id="PR00696">
    <property type="entry name" value="RSOLVASERUVC"/>
</dbReference>
<dbReference type="SUPFAM" id="SSF53098">
    <property type="entry name" value="Ribonuclease H-like"/>
    <property type="match status" value="1"/>
</dbReference>
<dbReference type="PROSITE" id="PS01321">
    <property type="entry name" value="RUVC"/>
    <property type="match status" value="1"/>
</dbReference>
<organism>
    <name type="scientific">Methylocella silvestris (strain DSM 15510 / CIP 108128 / LMG 27833 / NCIMB 13906 / BL2)</name>
    <dbReference type="NCBI Taxonomy" id="395965"/>
    <lineage>
        <taxon>Bacteria</taxon>
        <taxon>Pseudomonadati</taxon>
        <taxon>Pseudomonadota</taxon>
        <taxon>Alphaproteobacteria</taxon>
        <taxon>Hyphomicrobiales</taxon>
        <taxon>Beijerinckiaceae</taxon>
        <taxon>Methylocella</taxon>
    </lineage>
</organism>
<sequence>MNRAAIRIIGIDPGLRNMGWGVIEASGSRLSFIACGSVHSQAGSSLAERLCALHEGLLGVIADLSPMEAAVEETFVNCDPQSALKLGQARGVALVAPALAGLPVAEYAANLIKKTVVGNGHAEKAQIAMMVKFLLPMSEAKSADAADALAVAITHAQLRASRALLKSVSSMSVQTR</sequence>
<protein>
    <recommendedName>
        <fullName evidence="1">Crossover junction endodeoxyribonuclease RuvC</fullName>
        <ecNumber evidence="1">3.1.21.10</ecNumber>
    </recommendedName>
    <alternativeName>
        <fullName evidence="1">Holliday junction nuclease RuvC</fullName>
    </alternativeName>
    <alternativeName>
        <fullName evidence="1">Holliday junction resolvase RuvC</fullName>
    </alternativeName>
</protein>
<gene>
    <name evidence="1" type="primary">ruvC</name>
    <name type="ordered locus">Msil_0002</name>
</gene>
<proteinExistence type="inferred from homology"/>
<comment type="function">
    <text evidence="1">The RuvA-RuvB-RuvC complex processes Holliday junction (HJ) DNA during genetic recombination and DNA repair. Endonuclease that resolves HJ intermediates. Cleaves cruciform DNA by making single-stranded nicks across the HJ at symmetrical positions within the homologous arms, yielding a 5'-phosphate and a 3'-hydroxyl group; requires a central core of homology in the junction. The consensus cleavage sequence is 5'-(A/T)TT(C/G)-3'. Cleavage occurs on the 3'-side of the TT dinucleotide at the point of strand exchange. HJ branch migration catalyzed by RuvA-RuvB allows RuvC to scan DNA until it finds its consensus sequence, where it cleaves and resolves the cruciform DNA.</text>
</comment>
<comment type="catalytic activity">
    <reaction evidence="1">
        <text>Endonucleolytic cleavage at a junction such as a reciprocal single-stranded crossover between two homologous DNA duplexes (Holliday junction).</text>
        <dbReference type="EC" id="3.1.21.10"/>
    </reaction>
</comment>
<comment type="cofactor">
    <cofactor evidence="1">
        <name>Mg(2+)</name>
        <dbReference type="ChEBI" id="CHEBI:18420"/>
    </cofactor>
    <text evidence="1">Binds 2 Mg(2+) ion per subunit.</text>
</comment>
<comment type="subunit">
    <text evidence="1">Homodimer which binds Holliday junction (HJ) DNA. The HJ becomes 2-fold symmetrical on binding to RuvC with unstacked arms; it has a different conformation from HJ DNA in complex with RuvA. In the full resolvosome a probable DNA-RuvA(4)-RuvB(12)-RuvC(2) complex forms which resolves the HJ.</text>
</comment>
<comment type="subcellular location">
    <subcellularLocation>
        <location evidence="1">Cytoplasm</location>
    </subcellularLocation>
</comment>
<comment type="similarity">
    <text evidence="1">Belongs to the RuvC family.</text>
</comment>
<evidence type="ECO:0000255" key="1">
    <source>
        <dbReference type="HAMAP-Rule" id="MF_00034"/>
    </source>
</evidence>
<reference key="1">
    <citation type="journal article" date="2010" name="J. Bacteriol.">
        <title>Complete genome sequence of the aerobic facultative methanotroph Methylocella silvestris BL2.</title>
        <authorList>
            <person name="Chen Y."/>
            <person name="Crombie A."/>
            <person name="Rahman M.T."/>
            <person name="Dedysh S.N."/>
            <person name="Liesack W."/>
            <person name="Stott M.B."/>
            <person name="Alam M."/>
            <person name="Theisen A.R."/>
            <person name="Murrell J.C."/>
            <person name="Dunfield P.F."/>
        </authorList>
    </citation>
    <scope>NUCLEOTIDE SEQUENCE [LARGE SCALE GENOMIC DNA]</scope>
    <source>
        <strain>DSM 15510 / CIP 108128 / LMG 27833 / NCIMB 13906 / BL2</strain>
    </source>
</reference>